<gene>
    <name evidence="1" type="primary">metAS</name>
    <name type="ordered locus">Sputw3181_2706</name>
</gene>
<protein>
    <recommendedName>
        <fullName evidence="1">Homoserine O-succinyltransferase</fullName>
        <shortName evidence="1">HST</shortName>
        <ecNumber evidence="1">2.3.1.46</ecNumber>
    </recommendedName>
    <alternativeName>
        <fullName evidence="1">Homoserine transsuccinylase</fullName>
        <shortName evidence="1">HTS</shortName>
    </alternativeName>
</protein>
<keyword id="KW-0012">Acyltransferase</keyword>
<keyword id="KW-0028">Amino-acid biosynthesis</keyword>
<keyword id="KW-0963">Cytoplasm</keyword>
<keyword id="KW-0486">Methionine biosynthesis</keyword>
<keyword id="KW-0808">Transferase</keyword>
<name>METAS_SHESW</name>
<reference key="1">
    <citation type="submission" date="2006-12" db="EMBL/GenBank/DDBJ databases">
        <title>Complete sequence of Shewanella sp. W3-18-1.</title>
        <authorList>
            <consortium name="US DOE Joint Genome Institute"/>
            <person name="Copeland A."/>
            <person name="Lucas S."/>
            <person name="Lapidus A."/>
            <person name="Barry K."/>
            <person name="Detter J.C."/>
            <person name="Glavina del Rio T."/>
            <person name="Hammon N."/>
            <person name="Israni S."/>
            <person name="Dalin E."/>
            <person name="Tice H."/>
            <person name="Pitluck S."/>
            <person name="Chain P."/>
            <person name="Malfatti S."/>
            <person name="Shin M."/>
            <person name="Vergez L."/>
            <person name="Schmutz J."/>
            <person name="Larimer F."/>
            <person name="Land M."/>
            <person name="Hauser L."/>
            <person name="Kyrpides N."/>
            <person name="Lykidis A."/>
            <person name="Tiedje J."/>
            <person name="Richardson P."/>
        </authorList>
    </citation>
    <scope>NUCLEOTIDE SEQUENCE [LARGE SCALE GENOMIC DNA]</scope>
    <source>
        <strain>W3-18-1</strain>
    </source>
</reference>
<accession>A1RLI0</accession>
<organism>
    <name type="scientific">Shewanella sp. (strain W3-18-1)</name>
    <dbReference type="NCBI Taxonomy" id="351745"/>
    <lineage>
        <taxon>Bacteria</taxon>
        <taxon>Pseudomonadati</taxon>
        <taxon>Pseudomonadota</taxon>
        <taxon>Gammaproteobacteria</taxon>
        <taxon>Alteromonadales</taxon>
        <taxon>Shewanellaceae</taxon>
        <taxon>Shewanella</taxon>
    </lineage>
</organism>
<comment type="function">
    <text evidence="1">Transfers a succinyl group from succinyl-CoA to L-homoserine, forming succinyl-L-homoserine.</text>
</comment>
<comment type="catalytic activity">
    <reaction evidence="1">
        <text>L-homoserine + succinyl-CoA = O-succinyl-L-homoserine + CoA</text>
        <dbReference type="Rhea" id="RHEA:22008"/>
        <dbReference type="ChEBI" id="CHEBI:57287"/>
        <dbReference type="ChEBI" id="CHEBI:57292"/>
        <dbReference type="ChEBI" id="CHEBI:57476"/>
        <dbReference type="ChEBI" id="CHEBI:57661"/>
        <dbReference type="EC" id="2.3.1.46"/>
    </reaction>
</comment>
<comment type="pathway">
    <text evidence="1">Amino-acid biosynthesis; L-methionine biosynthesis via de novo pathway; O-succinyl-L-homoserine from L-homoserine: step 1/1.</text>
</comment>
<comment type="subcellular location">
    <subcellularLocation>
        <location evidence="1">Cytoplasm</location>
    </subcellularLocation>
</comment>
<comment type="similarity">
    <text evidence="1">Belongs to the MetA family.</text>
</comment>
<feature type="chain" id="PRO_1000021842" description="Homoserine O-succinyltransferase">
    <location>
        <begin position="1"/>
        <end position="318"/>
    </location>
</feature>
<feature type="active site" description="Acyl-thioester intermediate" evidence="1">
    <location>
        <position position="142"/>
    </location>
</feature>
<feature type="active site" description="Proton acceptor" evidence="1">
    <location>
        <position position="235"/>
    </location>
</feature>
<feature type="active site" evidence="1">
    <location>
        <position position="237"/>
    </location>
</feature>
<feature type="binding site" evidence="1">
    <location>
        <position position="163"/>
    </location>
    <ligand>
        <name>substrate</name>
    </ligand>
</feature>
<feature type="binding site" evidence="1">
    <location>
        <position position="192"/>
    </location>
    <ligand>
        <name>substrate</name>
    </ligand>
</feature>
<feature type="binding site" evidence="1">
    <location>
        <position position="249"/>
    </location>
    <ligand>
        <name>substrate</name>
    </ligand>
</feature>
<feature type="site" description="Important for acyl-CoA specificity" evidence="1">
    <location>
        <position position="111"/>
    </location>
</feature>
<feature type="site" description="Important for substrate specificity" evidence="1">
    <location>
        <position position="192"/>
    </location>
</feature>
<proteinExistence type="inferred from homology"/>
<evidence type="ECO:0000255" key="1">
    <source>
        <dbReference type="HAMAP-Rule" id="MF_00295"/>
    </source>
</evidence>
<sequence length="318" mass="37133">MPVRIPDHLPAAGVLESENIFVMSETRAANQDIRPMKVLILNLMPNKIETETQLLRLLGNTPLQVDVDLLRIHDKESKHTSIDHMNTFYRDFEDVRHKNYDGLIITGAPLGQIDFEDVVYWDHIREIIDWSQEHVTSVLFLCWAAHAGLYHLYGLNRKILQQKRSGVFVHRRTCQHFPLLRGFDDEFFAPHSRFAEMDVEDIRQHPQLQVLAQSDEAGAYLVLSRNNRNLFVMGHPEYQKSTLNDEYHRDLAQGLNPNVPQNYYRNNDPEAEAIARWHSHGSLLVSNWLNYYVYQLTPYDLSDMTAMTPWESRQETLP</sequence>
<dbReference type="EC" id="2.3.1.46" evidence="1"/>
<dbReference type="EMBL" id="CP000503">
    <property type="protein sequence ID" value="ABM25525.1"/>
    <property type="molecule type" value="Genomic_DNA"/>
</dbReference>
<dbReference type="SMR" id="A1RLI0"/>
<dbReference type="KEGG" id="shw:Sputw3181_2706"/>
<dbReference type="HOGENOM" id="CLU_057851_0_1_6"/>
<dbReference type="UniPathway" id="UPA00051">
    <property type="reaction ID" value="UER00075"/>
</dbReference>
<dbReference type="Proteomes" id="UP000002597">
    <property type="component" value="Chromosome"/>
</dbReference>
<dbReference type="GO" id="GO:0005737">
    <property type="term" value="C:cytoplasm"/>
    <property type="evidence" value="ECO:0007669"/>
    <property type="project" value="UniProtKB-SubCell"/>
</dbReference>
<dbReference type="GO" id="GO:0004414">
    <property type="term" value="F:homoserine O-acetyltransferase activity"/>
    <property type="evidence" value="ECO:0007669"/>
    <property type="project" value="UniProtKB-UniRule"/>
</dbReference>
<dbReference type="GO" id="GO:0008899">
    <property type="term" value="F:homoserine O-succinyltransferase activity"/>
    <property type="evidence" value="ECO:0007669"/>
    <property type="project" value="UniProtKB-EC"/>
</dbReference>
<dbReference type="GO" id="GO:0019281">
    <property type="term" value="P:L-methionine biosynthetic process from homoserine via O-succinyl-L-homoserine and cystathionine"/>
    <property type="evidence" value="ECO:0007669"/>
    <property type="project" value="InterPro"/>
</dbReference>
<dbReference type="CDD" id="cd03131">
    <property type="entry name" value="GATase1_HTS"/>
    <property type="match status" value="1"/>
</dbReference>
<dbReference type="FunFam" id="3.40.50.880:FF:000004">
    <property type="entry name" value="Homoserine O-succinyltransferase"/>
    <property type="match status" value="1"/>
</dbReference>
<dbReference type="Gene3D" id="3.40.50.880">
    <property type="match status" value="1"/>
</dbReference>
<dbReference type="HAMAP" id="MF_00295">
    <property type="entry name" value="MetA_acyltransf"/>
    <property type="match status" value="1"/>
</dbReference>
<dbReference type="InterPro" id="IPR029062">
    <property type="entry name" value="Class_I_gatase-like"/>
</dbReference>
<dbReference type="InterPro" id="IPR005697">
    <property type="entry name" value="HST_MetA"/>
</dbReference>
<dbReference type="InterPro" id="IPR033752">
    <property type="entry name" value="MetA_family"/>
</dbReference>
<dbReference type="NCBIfam" id="TIGR01001">
    <property type="entry name" value="metA"/>
    <property type="match status" value="1"/>
</dbReference>
<dbReference type="PANTHER" id="PTHR20919">
    <property type="entry name" value="HOMOSERINE O-SUCCINYLTRANSFERASE"/>
    <property type="match status" value="1"/>
</dbReference>
<dbReference type="PANTHER" id="PTHR20919:SF0">
    <property type="entry name" value="HOMOSERINE O-SUCCINYLTRANSFERASE"/>
    <property type="match status" value="1"/>
</dbReference>
<dbReference type="Pfam" id="PF04204">
    <property type="entry name" value="HTS"/>
    <property type="match status" value="1"/>
</dbReference>
<dbReference type="PIRSF" id="PIRSF000450">
    <property type="entry name" value="H_ser_succinyltr"/>
    <property type="match status" value="1"/>
</dbReference>
<dbReference type="SUPFAM" id="SSF52317">
    <property type="entry name" value="Class I glutamine amidotransferase-like"/>
    <property type="match status" value="1"/>
</dbReference>